<gene>
    <name evidence="1" type="primary">htpX</name>
    <name type="ordered locus">SPA1029</name>
</gene>
<organism>
    <name type="scientific">Salmonella paratyphi A (strain ATCC 9150 / SARB42)</name>
    <dbReference type="NCBI Taxonomy" id="295319"/>
    <lineage>
        <taxon>Bacteria</taxon>
        <taxon>Pseudomonadati</taxon>
        <taxon>Pseudomonadota</taxon>
        <taxon>Gammaproteobacteria</taxon>
        <taxon>Enterobacterales</taxon>
        <taxon>Enterobacteriaceae</taxon>
        <taxon>Salmonella</taxon>
    </lineage>
</organism>
<comment type="cofactor">
    <cofactor evidence="1">
        <name>Zn(2+)</name>
        <dbReference type="ChEBI" id="CHEBI:29105"/>
    </cofactor>
    <text evidence="1">Binds 1 zinc ion per subunit.</text>
</comment>
<comment type="subcellular location">
    <subcellularLocation>
        <location evidence="1">Cell inner membrane</location>
        <topology evidence="1">Multi-pass membrane protein</topology>
    </subcellularLocation>
</comment>
<comment type="similarity">
    <text evidence="1">Belongs to the peptidase M48B family.</text>
</comment>
<dbReference type="EC" id="3.4.24.-" evidence="1"/>
<dbReference type="EMBL" id="CP000026">
    <property type="protein sequence ID" value="AAV77000.1"/>
    <property type="molecule type" value="Genomic_DNA"/>
</dbReference>
<dbReference type="RefSeq" id="WP_000984498.1">
    <property type="nucleotide sequence ID" value="NC_006511.1"/>
</dbReference>
<dbReference type="SMR" id="Q5PHN9"/>
<dbReference type="MEROPS" id="M48.002"/>
<dbReference type="GeneID" id="66756319"/>
<dbReference type="KEGG" id="spt:SPA1029"/>
<dbReference type="HOGENOM" id="CLU_042266_1_0_6"/>
<dbReference type="Proteomes" id="UP000008185">
    <property type="component" value="Chromosome"/>
</dbReference>
<dbReference type="GO" id="GO:0005886">
    <property type="term" value="C:plasma membrane"/>
    <property type="evidence" value="ECO:0007669"/>
    <property type="project" value="UniProtKB-SubCell"/>
</dbReference>
<dbReference type="GO" id="GO:0004222">
    <property type="term" value="F:metalloendopeptidase activity"/>
    <property type="evidence" value="ECO:0007669"/>
    <property type="project" value="UniProtKB-UniRule"/>
</dbReference>
<dbReference type="GO" id="GO:0008270">
    <property type="term" value="F:zinc ion binding"/>
    <property type="evidence" value="ECO:0007669"/>
    <property type="project" value="UniProtKB-UniRule"/>
</dbReference>
<dbReference type="GO" id="GO:0006508">
    <property type="term" value="P:proteolysis"/>
    <property type="evidence" value="ECO:0007669"/>
    <property type="project" value="UniProtKB-KW"/>
</dbReference>
<dbReference type="CDD" id="cd07335">
    <property type="entry name" value="M48B_HtpX_like"/>
    <property type="match status" value="1"/>
</dbReference>
<dbReference type="FunFam" id="3.30.2010.10:FF:000001">
    <property type="entry name" value="Protease HtpX"/>
    <property type="match status" value="1"/>
</dbReference>
<dbReference type="Gene3D" id="3.30.2010.10">
    <property type="entry name" value="Metalloproteases ('zincins'), catalytic domain"/>
    <property type="match status" value="1"/>
</dbReference>
<dbReference type="HAMAP" id="MF_00188">
    <property type="entry name" value="Pept_M48_protease_HtpX"/>
    <property type="match status" value="1"/>
</dbReference>
<dbReference type="InterPro" id="IPR050083">
    <property type="entry name" value="HtpX_protease"/>
</dbReference>
<dbReference type="InterPro" id="IPR022919">
    <property type="entry name" value="Pept_M48_protease_HtpX"/>
</dbReference>
<dbReference type="InterPro" id="IPR001915">
    <property type="entry name" value="Peptidase_M48"/>
</dbReference>
<dbReference type="NCBIfam" id="NF003965">
    <property type="entry name" value="PRK05457.1"/>
    <property type="match status" value="1"/>
</dbReference>
<dbReference type="PANTHER" id="PTHR43221">
    <property type="entry name" value="PROTEASE HTPX"/>
    <property type="match status" value="1"/>
</dbReference>
<dbReference type="PANTHER" id="PTHR43221:SF1">
    <property type="entry name" value="PROTEASE HTPX"/>
    <property type="match status" value="1"/>
</dbReference>
<dbReference type="Pfam" id="PF01435">
    <property type="entry name" value="Peptidase_M48"/>
    <property type="match status" value="1"/>
</dbReference>
<feature type="chain" id="PRO_1000020931" description="Protease HtpX">
    <location>
        <begin position="1"/>
        <end position="293"/>
    </location>
</feature>
<feature type="transmembrane region" description="Helical" evidence="1">
    <location>
        <begin position="4"/>
        <end position="24"/>
    </location>
</feature>
<feature type="transmembrane region" description="Helical" evidence="1">
    <location>
        <begin position="34"/>
        <end position="54"/>
    </location>
</feature>
<feature type="transmembrane region" description="Helical" evidence="1">
    <location>
        <begin position="158"/>
        <end position="178"/>
    </location>
</feature>
<feature type="transmembrane region" description="Helical" evidence="1">
    <location>
        <begin position="193"/>
        <end position="213"/>
    </location>
</feature>
<feature type="active site" evidence="1">
    <location>
        <position position="140"/>
    </location>
</feature>
<feature type="binding site" evidence="1">
    <location>
        <position position="139"/>
    </location>
    <ligand>
        <name>Zn(2+)</name>
        <dbReference type="ChEBI" id="CHEBI:29105"/>
        <note>catalytic</note>
    </ligand>
</feature>
<feature type="binding site" evidence="1">
    <location>
        <position position="143"/>
    </location>
    <ligand>
        <name>Zn(2+)</name>
        <dbReference type="ChEBI" id="CHEBI:29105"/>
        <note>catalytic</note>
    </ligand>
</feature>
<feature type="binding site" evidence="1">
    <location>
        <position position="222"/>
    </location>
    <ligand>
        <name>Zn(2+)</name>
        <dbReference type="ChEBI" id="CHEBI:29105"/>
        <note>catalytic</note>
    </ligand>
</feature>
<protein>
    <recommendedName>
        <fullName evidence="1">Protease HtpX</fullName>
        <ecNumber evidence="1">3.4.24.-</ecNumber>
    </recommendedName>
    <alternativeName>
        <fullName evidence="1">Heat shock protein HtpX</fullName>
    </alternativeName>
</protein>
<accession>Q5PHN9</accession>
<name>HTPX_SALPA</name>
<evidence type="ECO:0000255" key="1">
    <source>
        <dbReference type="HAMAP-Rule" id="MF_00188"/>
    </source>
</evidence>
<sequence length="293" mass="31879">MMRIALFLLTNLAVMVVFGLVLSLTGIQSSSVQGLLIMALLFGFGGSFISLLMSKWMALKSVGGEVIEQPRNERERWLMNTVATQARQAGIAMPQVAIYHAPDINAFATGARRDASLVAVSTGLLQNMSPDEAEAVIAHEISHIANGDMVTMTLIQGVVNTFVIFISRIIAQIAAGFLGGNRDEGEGSNGNPLIYFAVATVLELVFGILASIITMWFSRYREFHADAGSAKLVGREKMIAALQRLKTSYEPQEATSMMAFCINGKSKSLSELFMTHPPLDKRIEALRSGEYLK</sequence>
<keyword id="KW-0997">Cell inner membrane</keyword>
<keyword id="KW-1003">Cell membrane</keyword>
<keyword id="KW-0378">Hydrolase</keyword>
<keyword id="KW-0472">Membrane</keyword>
<keyword id="KW-0479">Metal-binding</keyword>
<keyword id="KW-0482">Metalloprotease</keyword>
<keyword id="KW-0645">Protease</keyword>
<keyword id="KW-0346">Stress response</keyword>
<keyword id="KW-0812">Transmembrane</keyword>
<keyword id="KW-1133">Transmembrane helix</keyword>
<keyword id="KW-0862">Zinc</keyword>
<reference key="1">
    <citation type="journal article" date="2004" name="Nat. Genet.">
        <title>Comparison of genome degradation in Paratyphi A and Typhi, human-restricted serovars of Salmonella enterica that cause typhoid.</title>
        <authorList>
            <person name="McClelland M."/>
            <person name="Sanderson K.E."/>
            <person name="Clifton S.W."/>
            <person name="Latreille P."/>
            <person name="Porwollik S."/>
            <person name="Sabo A."/>
            <person name="Meyer R."/>
            <person name="Bieri T."/>
            <person name="Ozersky P."/>
            <person name="McLellan M."/>
            <person name="Harkins C.R."/>
            <person name="Wang C."/>
            <person name="Nguyen C."/>
            <person name="Berghoff A."/>
            <person name="Elliott G."/>
            <person name="Kohlberg S."/>
            <person name="Strong C."/>
            <person name="Du F."/>
            <person name="Carter J."/>
            <person name="Kremizki C."/>
            <person name="Layman D."/>
            <person name="Leonard S."/>
            <person name="Sun H."/>
            <person name="Fulton L."/>
            <person name="Nash W."/>
            <person name="Miner T."/>
            <person name="Minx P."/>
            <person name="Delehaunty K."/>
            <person name="Fronick C."/>
            <person name="Magrini V."/>
            <person name="Nhan M."/>
            <person name="Warren W."/>
            <person name="Florea L."/>
            <person name="Spieth J."/>
            <person name="Wilson R.K."/>
        </authorList>
    </citation>
    <scope>NUCLEOTIDE SEQUENCE [LARGE SCALE GENOMIC DNA]</scope>
    <source>
        <strain>ATCC 9150 / SARB42</strain>
    </source>
</reference>
<proteinExistence type="inferred from homology"/>